<organism>
    <name type="scientific">Escherichia coli O157:H7</name>
    <dbReference type="NCBI Taxonomy" id="83334"/>
    <lineage>
        <taxon>Bacteria</taxon>
        <taxon>Pseudomonadati</taxon>
        <taxon>Pseudomonadota</taxon>
        <taxon>Gammaproteobacteria</taxon>
        <taxon>Enterobacterales</taxon>
        <taxon>Enterobacteriaceae</taxon>
        <taxon>Escherichia</taxon>
    </lineage>
</organism>
<name>LPFB_ECO57</name>
<proteinExistence type="evidence at transcript level"/>
<comment type="function">
    <text evidence="3">Part of the lpfABCC'DE fimbrial operon. LP fimbriae may participate in the interaction with eukaryotic cells by assisting in microcolony formation.</text>
</comment>
<comment type="subcellular location">
    <subcellularLocation>
        <location evidence="1">Periplasm</location>
    </subcellularLocation>
</comment>
<comment type="induction">
    <text evidence="3">Induced during the exponential growth phase.</text>
</comment>
<comment type="similarity">
    <text evidence="4">Belongs to the periplasmic pilus chaperone family.</text>
</comment>
<reference key="1">
    <citation type="journal article" date="2001" name="Nature">
        <title>Genome sequence of enterohaemorrhagic Escherichia coli O157:H7.</title>
        <authorList>
            <person name="Perna N.T."/>
            <person name="Plunkett G. III"/>
            <person name="Burland V."/>
            <person name="Mau B."/>
            <person name="Glasner J.D."/>
            <person name="Rose D.J."/>
            <person name="Mayhew G.F."/>
            <person name="Evans P.S."/>
            <person name="Gregor J."/>
            <person name="Kirkpatrick H.A."/>
            <person name="Posfai G."/>
            <person name="Hackett J."/>
            <person name="Klink S."/>
            <person name="Boutin A."/>
            <person name="Shao Y."/>
            <person name="Miller L."/>
            <person name="Grotbeck E.J."/>
            <person name="Davis N.W."/>
            <person name="Lim A."/>
            <person name="Dimalanta E.T."/>
            <person name="Potamousis K."/>
            <person name="Apodaca J."/>
            <person name="Anantharaman T.S."/>
            <person name="Lin J."/>
            <person name="Yen G."/>
            <person name="Schwartz D.C."/>
            <person name="Welch R.A."/>
            <person name="Blattner F.R."/>
        </authorList>
    </citation>
    <scope>NUCLEOTIDE SEQUENCE [LARGE SCALE GENOMIC DNA]</scope>
    <source>
        <strain>O157:H7 / EDL933 / ATCC 700927 / EHEC</strain>
    </source>
</reference>
<reference key="2">
    <citation type="journal article" date="2002" name="Infect. Immun.">
        <title>Identification and characterization of lpfABCC'DE, a fimbrial operon of enterohemorrhagic Escherichia coli O157:H7.</title>
        <authorList>
            <person name="Torres A.G."/>
            <person name="Giron J.A."/>
            <person name="Perna N.T."/>
            <person name="Burland V."/>
            <person name="Blattner F.R."/>
            <person name="Avelino-Flores F."/>
            <person name="Kaper J.B."/>
        </authorList>
    </citation>
    <scope>FUNCTION</scope>
    <scope>INDUCTION</scope>
    <scope>GENE NAME</scope>
    <source>
        <strain>O157:H7 / EDL933 / ATCC 700927 / EHEC</strain>
    </source>
</reference>
<evidence type="ECO:0000250" key="1"/>
<evidence type="ECO:0000255" key="2"/>
<evidence type="ECO:0000269" key="3">
    <source>
    </source>
</evidence>
<evidence type="ECO:0000305" key="4"/>
<keyword id="KW-0143">Chaperone</keyword>
<keyword id="KW-1029">Fimbrium biogenesis</keyword>
<keyword id="KW-0574">Periplasm</keyword>
<keyword id="KW-0732">Signal</keyword>
<protein>
    <recommendedName>
        <fullName>Probable fimbrial chaperone LpfB</fullName>
    </recommendedName>
</protein>
<dbReference type="EMBL" id="AE005174">
    <property type="protein sequence ID" value="AAG58694.1"/>
    <property type="molecule type" value="Genomic_DNA"/>
</dbReference>
<dbReference type="PIR" id="B86029">
    <property type="entry name" value="B86029"/>
</dbReference>
<dbReference type="PIR" id="F91182">
    <property type="entry name" value="F91182"/>
</dbReference>
<dbReference type="STRING" id="386585.gene:10367509"/>
<dbReference type="KEGG" id="ece:Z4969"/>
<dbReference type="eggNOG" id="COG3121">
    <property type="taxonomic scope" value="Bacteria"/>
</dbReference>
<dbReference type="Proteomes" id="UP000002519">
    <property type="component" value="Chromosome"/>
</dbReference>
<dbReference type="GO" id="GO:0030288">
    <property type="term" value="C:outer membrane-bounded periplasmic space"/>
    <property type="evidence" value="ECO:0007669"/>
    <property type="project" value="InterPro"/>
</dbReference>
<dbReference type="GO" id="GO:0071555">
    <property type="term" value="P:cell wall organization"/>
    <property type="evidence" value="ECO:0007669"/>
    <property type="project" value="InterPro"/>
</dbReference>
<dbReference type="GO" id="GO:0061077">
    <property type="term" value="P:chaperone-mediated protein folding"/>
    <property type="evidence" value="ECO:0007669"/>
    <property type="project" value="InterPro"/>
</dbReference>
<dbReference type="FunFam" id="2.60.40.10:FF:000458">
    <property type="entry name" value="Molecular chaperone FimC"/>
    <property type="match status" value="1"/>
</dbReference>
<dbReference type="Gene3D" id="2.60.40.10">
    <property type="entry name" value="Immunoglobulins"/>
    <property type="match status" value="2"/>
</dbReference>
<dbReference type="InterPro" id="IPR013783">
    <property type="entry name" value="Ig-like_fold"/>
</dbReference>
<dbReference type="InterPro" id="IPR008962">
    <property type="entry name" value="PapD-like_sf"/>
</dbReference>
<dbReference type="InterPro" id="IPR050643">
    <property type="entry name" value="Periplasmic_pilus_chap"/>
</dbReference>
<dbReference type="InterPro" id="IPR036316">
    <property type="entry name" value="Pili_assmbl_chap_C_dom_sf"/>
</dbReference>
<dbReference type="InterPro" id="IPR001829">
    <property type="entry name" value="Pili_assmbl_chaperone_bac"/>
</dbReference>
<dbReference type="InterPro" id="IPR016148">
    <property type="entry name" value="Pili_assmbl_chaperone_C"/>
</dbReference>
<dbReference type="InterPro" id="IPR018046">
    <property type="entry name" value="Pili_assmbl_chaperone_CS"/>
</dbReference>
<dbReference type="InterPro" id="IPR016147">
    <property type="entry name" value="Pili_assmbl_chaperone_N"/>
</dbReference>
<dbReference type="NCBIfam" id="NF011755">
    <property type="entry name" value="PRK15208.1"/>
    <property type="match status" value="1"/>
</dbReference>
<dbReference type="PANTHER" id="PTHR30251:SF11">
    <property type="entry name" value="CHAPERONE PROTEIN FIMC-RELATED"/>
    <property type="match status" value="1"/>
</dbReference>
<dbReference type="PANTHER" id="PTHR30251">
    <property type="entry name" value="PILUS ASSEMBLY CHAPERONE"/>
    <property type="match status" value="1"/>
</dbReference>
<dbReference type="Pfam" id="PF02753">
    <property type="entry name" value="PapD_C"/>
    <property type="match status" value="1"/>
</dbReference>
<dbReference type="Pfam" id="PF00345">
    <property type="entry name" value="PapD_N"/>
    <property type="match status" value="1"/>
</dbReference>
<dbReference type="PRINTS" id="PR00969">
    <property type="entry name" value="CHAPERONPILI"/>
</dbReference>
<dbReference type="SUPFAM" id="SSF49354">
    <property type="entry name" value="PapD-like"/>
    <property type="match status" value="1"/>
</dbReference>
<dbReference type="SUPFAM" id="SSF49584">
    <property type="entry name" value="Periplasmic chaperone C-domain"/>
    <property type="match status" value="1"/>
</dbReference>
<dbReference type="PROSITE" id="PS00635">
    <property type="entry name" value="PILI_CHAPERONE"/>
    <property type="match status" value="1"/>
</dbReference>
<accession>Q8X5K6</accession>
<gene>
    <name type="primary">lpfB</name>
    <name type="ordered locus">Z4969</name>
</gene>
<feature type="signal peptide" evidence="2">
    <location>
        <begin position="1"/>
        <end position="24"/>
    </location>
</feature>
<feature type="chain" id="PRO_0000429484" description="Probable fimbrial chaperone LpfB">
    <location>
        <begin position="25"/>
        <end position="232"/>
    </location>
</feature>
<sequence length="232" mass="25625">MDRMMKSKFVALALSLFLSQSVLAGGVGLSSTRVIYDGSKKEASLTVQNKSKTEEFLIQSWVDDAAGSKKTPFIITPPLFKLDPEKNNILRIVNITPGLPQDRESVYWVNVKAIPSKSDDSENKNVLQIAVRTRIKLFYRPAGLKGDVKTAPNELRFTRNGNQLRVDNPTVFNITFNQFFANDKEIEKAGMVPAKGALNITLPAGVGSVSKIKYNTINDFGSXAEMITKNVD</sequence>